<sequence>MGPVMLDVEGYELDAEEREILAHPLVGGLILFTRNYHDPAQLRELVCQIRAASRNHLVVAVDQEGGRVQRFREGFTRLPAAQSFAALLGMEEGGKLAQEAGWLMASEMIAMDIDISFAPVLDVGHISAAIGERSYHADPQKALAIASRFIDGMHEAGMKTTGKHFPGHGAVTADSHKETPCDPRPQAEIRAKDMSVFSSLIRENKLDAIMPAHVIYSDVDPRPASGSPYWLKTVLRQELGFDGVIFSDDLSMEGAAIMGSYAERGQASLDAGCDMILVCNNRKGAVSVLDNLSPIKAERVTRLYHKGSFSRQELMDSARWKAISTRLNQLHERWQEEKAGH</sequence>
<feature type="chain" id="PRO_1000005651" description="Beta-hexosaminidase">
    <location>
        <begin position="1"/>
        <end position="341"/>
    </location>
</feature>
<feature type="active site" description="Proton donor/acceptor" evidence="1">
    <location>
        <position position="176"/>
    </location>
</feature>
<feature type="active site" description="Nucleophile" evidence="1">
    <location>
        <position position="248"/>
    </location>
</feature>
<feature type="binding site" evidence="1">
    <location>
        <position position="62"/>
    </location>
    <ligand>
        <name>substrate</name>
    </ligand>
</feature>
<feature type="binding site" evidence="1">
    <location>
        <position position="70"/>
    </location>
    <ligand>
        <name>substrate</name>
    </ligand>
</feature>
<feature type="binding site" evidence="1">
    <location>
        <position position="133"/>
    </location>
    <ligand>
        <name>substrate</name>
    </ligand>
</feature>
<feature type="binding site" evidence="1">
    <location>
        <begin position="163"/>
        <end position="164"/>
    </location>
    <ligand>
        <name>substrate</name>
    </ligand>
</feature>
<feature type="site" description="Important for catalytic activity" evidence="1">
    <location>
        <position position="174"/>
    </location>
</feature>
<protein>
    <recommendedName>
        <fullName evidence="1">Beta-hexosaminidase</fullName>
        <ecNumber evidence="1">3.2.1.52</ecNumber>
    </recommendedName>
    <alternativeName>
        <fullName evidence="1">Beta-N-acetylhexosaminidase</fullName>
    </alternativeName>
    <alternativeName>
        <fullName evidence="1">N-acetyl-beta-glucosaminidase</fullName>
    </alternativeName>
</protein>
<keyword id="KW-0131">Cell cycle</keyword>
<keyword id="KW-0132">Cell division</keyword>
<keyword id="KW-0133">Cell shape</keyword>
<keyword id="KW-0961">Cell wall biogenesis/degradation</keyword>
<keyword id="KW-0963">Cytoplasm</keyword>
<keyword id="KW-0326">Glycosidase</keyword>
<keyword id="KW-0378">Hydrolase</keyword>
<keyword id="KW-0573">Peptidoglycan synthesis</keyword>
<keyword id="KW-1185">Reference proteome</keyword>
<proteinExistence type="inferred from homology"/>
<dbReference type="EC" id="3.2.1.52" evidence="1"/>
<dbReference type="EMBL" id="CP000468">
    <property type="protein sequence ID" value="ABJ00491.1"/>
    <property type="molecule type" value="Genomic_DNA"/>
</dbReference>
<dbReference type="RefSeq" id="WP_000529276.1">
    <property type="nucleotide sequence ID" value="NC_008563.1"/>
</dbReference>
<dbReference type="SMR" id="A1AA01"/>
<dbReference type="CAZy" id="GH3">
    <property type="family name" value="Glycoside Hydrolase Family 3"/>
</dbReference>
<dbReference type="KEGG" id="ecv:APECO1_188"/>
<dbReference type="HOGENOM" id="CLU_008392_0_0_6"/>
<dbReference type="UniPathway" id="UPA00544"/>
<dbReference type="Proteomes" id="UP000008216">
    <property type="component" value="Chromosome"/>
</dbReference>
<dbReference type="GO" id="GO:0005737">
    <property type="term" value="C:cytoplasm"/>
    <property type="evidence" value="ECO:0007669"/>
    <property type="project" value="UniProtKB-SubCell"/>
</dbReference>
<dbReference type="GO" id="GO:0004563">
    <property type="term" value="F:beta-N-acetylhexosaminidase activity"/>
    <property type="evidence" value="ECO:0007669"/>
    <property type="project" value="UniProtKB-UniRule"/>
</dbReference>
<dbReference type="GO" id="GO:0005975">
    <property type="term" value="P:carbohydrate metabolic process"/>
    <property type="evidence" value="ECO:0007669"/>
    <property type="project" value="InterPro"/>
</dbReference>
<dbReference type="GO" id="GO:0051301">
    <property type="term" value="P:cell division"/>
    <property type="evidence" value="ECO:0007669"/>
    <property type="project" value="UniProtKB-KW"/>
</dbReference>
<dbReference type="GO" id="GO:0071555">
    <property type="term" value="P:cell wall organization"/>
    <property type="evidence" value="ECO:0007669"/>
    <property type="project" value="UniProtKB-KW"/>
</dbReference>
<dbReference type="GO" id="GO:0009252">
    <property type="term" value="P:peptidoglycan biosynthetic process"/>
    <property type="evidence" value="ECO:0007669"/>
    <property type="project" value="UniProtKB-KW"/>
</dbReference>
<dbReference type="GO" id="GO:0009254">
    <property type="term" value="P:peptidoglycan turnover"/>
    <property type="evidence" value="ECO:0007669"/>
    <property type="project" value="UniProtKB-UniRule"/>
</dbReference>
<dbReference type="GO" id="GO:0008360">
    <property type="term" value="P:regulation of cell shape"/>
    <property type="evidence" value="ECO:0007669"/>
    <property type="project" value="UniProtKB-KW"/>
</dbReference>
<dbReference type="FunFam" id="3.20.20.300:FF:000001">
    <property type="entry name" value="Beta-hexosaminidase"/>
    <property type="match status" value="1"/>
</dbReference>
<dbReference type="Gene3D" id="3.20.20.300">
    <property type="entry name" value="Glycoside hydrolase, family 3, N-terminal domain"/>
    <property type="match status" value="1"/>
</dbReference>
<dbReference type="HAMAP" id="MF_00364">
    <property type="entry name" value="NagZ"/>
    <property type="match status" value="1"/>
</dbReference>
<dbReference type="InterPro" id="IPR022956">
    <property type="entry name" value="Beta_hexosaminidase_bac"/>
</dbReference>
<dbReference type="InterPro" id="IPR019800">
    <property type="entry name" value="Glyco_hydro_3_AS"/>
</dbReference>
<dbReference type="InterPro" id="IPR001764">
    <property type="entry name" value="Glyco_hydro_3_N"/>
</dbReference>
<dbReference type="InterPro" id="IPR036962">
    <property type="entry name" value="Glyco_hydro_3_N_sf"/>
</dbReference>
<dbReference type="InterPro" id="IPR017853">
    <property type="entry name" value="Glycoside_hydrolase_SF"/>
</dbReference>
<dbReference type="InterPro" id="IPR050226">
    <property type="entry name" value="NagZ_Beta-hexosaminidase"/>
</dbReference>
<dbReference type="NCBIfam" id="NF003740">
    <property type="entry name" value="PRK05337.1"/>
    <property type="match status" value="1"/>
</dbReference>
<dbReference type="PANTHER" id="PTHR30480:SF13">
    <property type="entry name" value="BETA-HEXOSAMINIDASE"/>
    <property type="match status" value="1"/>
</dbReference>
<dbReference type="PANTHER" id="PTHR30480">
    <property type="entry name" value="BETA-HEXOSAMINIDASE-RELATED"/>
    <property type="match status" value="1"/>
</dbReference>
<dbReference type="Pfam" id="PF00933">
    <property type="entry name" value="Glyco_hydro_3"/>
    <property type="match status" value="1"/>
</dbReference>
<dbReference type="SUPFAM" id="SSF51445">
    <property type="entry name" value="(Trans)glycosidases"/>
    <property type="match status" value="1"/>
</dbReference>
<dbReference type="PROSITE" id="PS00775">
    <property type="entry name" value="GLYCOSYL_HYDROL_F3"/>
    <property type="match status" value="1"/>
</dbReference>
<reference key="1">
    <citation type="journal article" date="2007" name="J. Bacteriol.">
        <title>The genome sequence of avian pathogenic Escherichia coli strain O1:K1:H7 shares strong similarities with human extraintestinal pathogenic E. coli genomes.</title>
        <authorList>
            <person name="Johnson T.J."/>
            <person name="Kariyawasam S."/>
            <person name="Wannemuehler Y."/>
            <person name="Mangiamele P."/>
            <person name="Johnson S.J."/>
            <person name="Doetkott C."/>
            <person name="Skyberg J.A."/>
            <person name="Lynne A.M."/>
            <person name="Johnson J.R."/>
            <person name="Nolan L.K."/>
        </authorList>
    </citation>
    <scope>NUCLEOTIDE SEQUENCE [LARGE SCALE GENOMIC DNA]</scope>
</reference>
<comment type="function">
    <text evidence="1">Plays a role in peptidoglycan recycling by cleaving the terminal beta-1,4-linked N-acetylglucosamine (GlcNAc) from peptide-linked peptidoglycan fragments, giving rise to free GlcNAc, anhydro-N-acetylmuramic acid and anhydro-N-acetylmuramic acid-linked peptides.</text>
</comment>
<comment type="catalytic activity">
    <reaction evidence="1">
        <text>Hydrolysis of terminal non-reducing N-acetyl-D-hexosamine residues in N-acetyl-beta-D-hexosaminides.</text>
        <dbReference type="EC" id="3.2.1.52"/>
    </reaction>
</comment>
<comment type="pathway">
    <text evidence="1">Cell wall biogenesis; peptidoglycan recycling.</text>
</comment>
<comment type="subcellular location">
    <subcellularLocation>
        <location evidence="1">Cytoplasm</location>
    </subcellularLocation>
</comment>
<comment type="similarity">
    <text evidence="1">Belongs to the glycosyl hydrolase 3 family. NagZ subfamily.</text>
</comment>
<gene>
    <name evidence="1" type="primary">nagZ</name>
    <name type="ordered locus">Ecok1_09970</name>
    <name type="ORF">APECO1_188</name>
</gene>
<organism>
    <name type="scientific">Escherichia coli O1:K1 / APEC</name>
    <dbReference type="NCBI Taxonomy" id="405955"/>
    <lineage>
        <taxon>Bacteria</taxon>
        <taxon>Pseudomonadati</taxon>
        <taxon>Pseudomonadota</taxon>
        <taxon>Gammaproteobacteria</taxon>
        <taxon>Enterobacterales</taxon>
        <taxon>Enterobacteriaceae</taxon>
        <taxon>Escherichia</taxon>
    </lineage>
</organism>
<accession>A1AA01</accession>
<name>NAGZ_ECOK1</name>
<evidence type="ECO:0000255" key="1">
    <source>
        <dbReference type="HAMAP-Rule" id="MF_00364"/>
    </source>
</evidence>